<sequence length="273" mass="30430">MFDLTGKNVCYVADCGGIALETCKVLMTKNIAKLAMLYSVENPQAIAQLQAIKPSTQIFFWTYDVTMAREDMKQYFDEVMVQMDYIDVLINGATLCDEQNIDDTINTNLTGMMNTCATVLPYMDKQQLGKGGLIVNVTSVVGLDPSPVFCAYSASKFGVIGFTRSLADPLYYTQNGVAVMAVCCGPTKMFVDRQLTAFLSYGQPFVDRLRTAPCQSTTICAKNIVKAIECAVNGRIWIADKGELELVKLHWYWHMADQLVNYMHSTSEEKDED</sequence>
<accession>Q07586</accession>
<evidence type="ECO:0000250" key="1"/>
<evidence type="ECO:0000255" key="2">
    <source>
        <dbReference type="PROSITE-ProRule" id="PRU10001"/>
    </source>
</evidence>
<evidence type="ECO:0000305" key="3"/>
<feature type="chain" id="PRO_0000054505" description="Alcohol dehydrogenase-related 31 kDa protein">
    <location>
        <begin position="1"/>
        <end position="273"/>
    </location>
</feature>
<feature type="active site" description="Proton acceptor" evidence="2">
    <location>
        <position position="152"/>
    </location>
</feature>
<feature type="binding site" evidence="1">
    <location>
        <begin position="11"/>
        <end position="34"/>
    </location>
    <ligand>
        <name>NAD(+)</name>
        <dbReference type="ChEBI" id="CHEBI:57540"/>
    </ligand>
</feature>
<feature type="binding site" evidence="1">
    <location>
        <position position="139"/>
    </location>
    <ligand>
        <name>substrate</name>
    </ligand>
</feature>
<gene>
    <name type="primary">Adhr</name>
    <name type="synonym">Adh-dup</name>
</gene>
<name>ADHR_DROIM</name>
<proteinExistence type="inferred from homology"/>
<organism>
    <name type="scientific">Drosophila immigrans</name>
    <name type="common">Fruit fly</name>
    <dbReference type="NCBI Taxonomy" id="7250"/>
    <lineage>
        <taxon>Eukaryota</taxon>
        <taxon>Metazoa</taxon>
        <taxon>Ecdysozoa</taxon>
        <taxon>Arthropoda</taxon>
        <taxon>Hexapoda</taxon>
        <taxon>Insecta</taxon>
        <taxon>Pterygota</taxon>
        <taxon>Neoptera</taxon>
        <taxon>Endopterygota</taxon>
        <taxon>Diptera</taxon>
        <taxon>Brachycera</taxon>
        <taxon>Muscomorpha</taxon>
        <taxon>Ephydroidea</taxon>
        <taxon>Drosophilidae</taxon>
        <taxon>Drosophila</taxon>
    </lineage>
</organism>
<dbReference type="EMBL" id="M97638">
    <property type="protein sequence ID" value="AAA28358.1"/>
    <property type="molecule type" value="Genomic_DNA"/>
</dbReference>
<dbReference type="PIR" id="JN0567">
    <property type="entry name" value="JN0567"/>
</dbReference>
<dbReference type="SMR" id="Q07586"/>
<dbReference type="GO" id="GO:0005737">
    <property type="term" value="C:cytoplasm"/>
    <property type="evidence" value="ECO:0007669"/>
    <property type="project" value="TreeGrafter"/>
</dbReference>
<dbReference type="GO" id="GO:0016491">
    <property type="term" value="F:oxidoreductase activity"/>
    <property type="evidence" value="ECO:0007669"/>
    <property type="project" value="UniProtKB-KW"/>
</dbReference>
<dbReference type="CDD" id="cd05323">
    <property type="entry name" value="ADH_SDR_c_like"/>
    <property type="match status" value="1"/>
</dbReference>
<dbReference type="Gene3D" id="3.40.50.720">
    <property type="entry name" value="NAD(P)-binding Rossmann-like Domain"/>
    <property type="match status" value="1"/>
</dbReference>
<dbReference type="InterPro" id="IPR002427">
    <property type="entry name" value="ADH-rel"/>
</dbReference>
<dbReference type="InterPro" id="IPR036291">
    <property type="entry name" value="NAD(P)-bd_dom_sf"/>
</dbReference>
<dbReference type="InterPro" id="IPR020904">
    <property type="entry name" value="Sc_DH/Rdtase_CS"/>
</dbReference>
<dbReference type="InterPro" id="IPR002347">
    <property type="entry name" value="SDR_fam"/>
</dbReference>
<dbReference type="PANTHER" id="PTHR44229">
    <property type="entry name" value="15-HYDROXYPROSTAGLANDIN DEHYDROGENASE [NAD(+)]"/>
    <property type="match status" value="1"/>
</dbReference>
<dbReference type="PANTHER" id="PTHR44229:SF8">
    <property type="entry name" value="ALCOHOL DEHYDROGENASE-RELATED"/>
    <property type="match status" value="1"/>
</dbReference>
<dbReference type="Pfam" id="PF00106">
    <property type="entry name" value="adh_short"/>
    <property type="match status" value="1"/>
</dbReference>
<dbReference type="PRINTS" id="PR01170">
    <property type="entry name" value="ADHRELATED"/>
</dbReference>
<dbReference type="PRINTS" id="PR01167">
    <property type="entry name" value="INSADHFAMILY"/>
</dbReference>
<dbReference type="PRINTS" id="PR00080">
    <property type="entry name" value="SDRFAMILY"/>
</dbReference>
<dbReference type="SUPFAM" id="SSF51735">
    <property type="entry name" value="NAD(P)-binding Rossmann-fold domains"/>
    <property type="match status" value="1"/>
</dbReference>
<dbReference type="PROSITE" id="PS00061">
    <property type="entry name" value="ADH_SHORT"/>
    <property type="match status" value="1"/>
</dbReference>
<reference key="1">
    <citation type="journal article" date="1993" name="Gene">
        <title>Adh and Adh-dup sequences of Drosophila lebanonensis and D. immigrans: interspecies comparisons.</title>
        <authorList>
            <person name="Albalat R."/>
            <person name="Gonzalez-Duarte R."/>
        </authorList>
    </citation>
    <scope>NUCLEOTIDE SEQUENCE [GENOMIC DNA]</scope>
</reference>
<comment type="similarity">
    <text evidence="3">Belongs to the short-chain dehydrogenases/reductases (SDR) family.</text>
</comment>
<keyword id="KW-0560">Oxidoreductase</keyword>
<protein>
    <recommendedName>
        <fullName>Alcohol dehydrogenase-related 31 kDa protein</fullName>
    </recommendedName>
</protein>